<keyword id="KW-1185">Reference proteome</keyword>
<keyword id="KW-0687">Ribonucleoprotein</keyword>
<keyword id="KW-0689">Ribosomal protein</keyword>
<dbReference type="EMBL" id="CP000746">
    <property type="protein sequence ID" value="ABR73892.1"/>
    <property type="molecule type" value="Genomic_DNA"/>
</dbReference>
<dbReference type="RefSeq" id="WP_012072272.1">
    <property type="nucleotide sequence ID" value="NC_009655.1"/>
</dbReference>
<dbReference type="SMR" id="A6VLP5"/>
<dbReference type="STRING" id="339671.Asuc_0517"/>
<dbReference type="KEGG" id="asu:Asuc_0517"/>
<dbReference type="eggNOG" id="COG0335">
    <property type="taxonomic scope" value="Bacteria"/>
</dbReference>
<dbReference type="HOGENOM" id="CLU_103507_2_2_6"/>
<dbReference type="OrthoDB" id="9803541at2"/>
<dbReference type="Proteomes" id="UP000001114">
    <property type="component" value="Chromosome"/>
</dbReference>
<dbReference type="GO" id="GO:0022625">
    <property type="term" value="C:cytosolic large ribosomal subunit"/>
    <property type="evidence" value="ECO:0007669"/>
    <property type="project" value="TreeGrafter"/>
</dbReference>
<dbReference type="GO" id="GO:0003735">
    <property type="term" value="F:structural constituent of ribosome"/>
    <property type="evidence" value="ECO:0007669"/>
    <property type="project" value="InterPro"/>
</dbReference>
<dbReference type="GO" id="GO:0006412">
    <property type="term" value="P:translation"/>
    <property type="evidence" value="ECO:0007669"/>
    <property type="project" value="UniProtKB-UniRule"/>
</dbReference>
<dbReference type="FunFam" id="2.30.30.790:FF:000001">
    <property type="entry name" value="50S ribosomal protein L19"/>
    <property type="match status" value="1"/>
</dbReference>
<dbReference type="Gene3D" id="2.30.30.790">
    <property type="match status" value="1"/>
</dbReference>
<dbReference type="HAMAP" id="MF_00402">
    <property type="entry name" value="Ribosomal_bL19"/>
    <property type="match status" value="1"/>
</dbReference>
<dbReference type="InterPro" id="IPR001857">
    <property type="entry name" value="Ribosomal_bL19"/>
</dbReference>
<dbReference type="InterPro" id="IPR018257">
    <property type="entry name" value="Ribosomal_bL19_CS"/>
</dbReference>
<dbReference type="InterPro" id="IPR038657">
    <property type="entry name" value="Ribosomal_bL19_sf"/>
</dbReference>
<dbReference type="InterPro" id="IPR008991">
    <property type="entry name" value="Translation_prot_SH3-like_sf"/>
</dbReference>
<dbReference type="NCBIfam" id="TIGR01024">
    <property type="entry name" value="rplS_bact"/>
    <property type="match status" value="1"/>
</dbReference>
<dbReference type="PANTHER" id="PTHR15680:SF9">
    <property type="entry name" value="LARGE RIBOSOMAL SUBUNIT PROTEIN BL19M"/>
    <property type="match status" value="1"/>
</dbReference>
<dbReference type="PANTHER" id="PTHR15680">
    <property type="entry name" value="RIBOSOMAL PROTEIN L19"/>
    <property type="match status" value="1"/>
</dbReference>
<dbReference type="Pfam" id="PF01245">
    <property type="entry name" value="Ribosomal_L19"/>
    <property type="match status" value="1"/>
</dbReference>
<dbReference type="PIRSF" id="PIRSF002191">
    <property type="entry name" value="Ribosomal_L19"/>
    <property type="match status" value="1"/>
</dbReference>
<dbReference type="PRINTS" id="PR00061">
    <property type="entry name" value="RIBOSOMALL19"/>
</dbReference>
<dbReference type="SUPFAM" id="SSF50104">
    <property type="entry name" value="Translation proteins SH3-like domain"/>
    <property type="match status" value="1"/>
</dbReference>
<dbReference type="PROSITE" id="PS01015">
    <property type="entry name" value="RIBOSOMAL_L19"/>
    <property type="match status" value="1"/>
</dbReference>
<organism>
    <name type="scientific">Actinobacillus succinogenes (strain ATCC 55618 / DSM 22257 / CCUG 43843 / 130Z)</name>
    <dbReference type="NCBI Taxonomy" id="339671"/>
    <lineage>
        <taxon>Bacteria</taxon>
        <taxon>Pseudomonadati</taxon>
        <taxon>Pseudomonadota</taxon>
        <taxon>Gammaproteobacteria</taxon>
        <taxon>Pasteurellales</taxon>
        <taxon>Pasteurellaceae</taxon>
        <taxon>Actinobacillus</taxon>
    </lineage>
</organism>
<reference key="1">
    <citation type="journal article" date="2010" name="BMC Genomics">
        <title>A genomic perspective on the potential of Actinobacillus succinogenes for industrial succinate production.</title>
        <authorList>
            <person name="McKinlay J.B."/>
            <person name="Laivenieks M."/>
            <person name="Schindler B.D."/>
            <person name="McKinlay A.A."/>
            <person name="Siddaramappa S."/>
            <person name="Challacombe J.F."/>
            <person name="Lowry S.R."/>
            <person name="Clum A."/>
            <person name="Lapidus A.L."/>
            <person name="Burkhart K.B."/>
            <person name="Harkins V."/>
            <person name="Vieille C."/>
        </authorList>
    </citation>
    <scope>NUCLEOTIDE SEQUENCE [LARGE SCALE GENOMIC DNA]</scope>
    <source>
        <strain>ATCC 55618 / DSM 22257 / CCUG 43843 / 130Z</strain>
    </source>
</reference>
<feature type="chain" id="PRO_1000072238" description="Large ribosomal subunit protein bL19">
    <location>
        <begin position="1"/>
        <end position="116"/>
    </location>
</feature>
<accession>A6VLP5</accession>
<evidence type="ECO:0000255" key="1">
    <source>
        <dbReference type="HAMAP-Rule" id="MF_00402"/>
    </source>
</evidence>
<evidence type="ECO:0000305" key="2"/>
<sequence length="116" mass="13129">MSNIIKQLEEEQLKQNVPSFRPGDTLEVKVWVVEGAKRRLQAFEGVVIAIRNRGLHSAFTLRKVSNGTGVERVFQTHSPVIDSITVKRKGAVRKAKLYYLRERSGKSARIKERLGA</sequence>
<comment type="function">
    <text evidence="1">This protein is located at the 30S-50S ribosomal subunit interface and may play a role in the structure and function of the aminoacyl-tRNA binding site.</text>
</comment>
<comment type="similarity">
    <text evidence="1">Belongs to the bacterial ribosomal protein bL19 family.</text>
</comment>
<name>RL19_ACTSZ</name>
<gene>
    <name evidence="1" type="primary">rplS</name>
    <name type="ordered locus">Asuc_0517</name>
</gene>
<proteinExistence type="inferred from homology"/>
<protein>
    <recommendedName>
        <fullName evidence="1">Large ribosomal subunit protein bL19</fullName>
    </recommendedName>
    <alternativeName>
        <fullName evidence="2">50S ribosomal protein L19</fullName>
    </alternativeName>
</protein>